<organism>
    <name type="scientific">Oryza sativa subsp. japonica</name>
    <name type="common">Rice</name>
    <dbReference type="NCBI Taxonomy" id="39947"/>
    <lineage>
        <taxon>Eukaryota</taxon>
        <taxon>Viridiplantae</taxon>
        <taxon>Streptophyta</taxon>
        <taxon>Embryophyta</taxon>
        <taxon>Tracheophyta</taxon>
        <taxon>Spermatophyta</taxon>
        <taxon>Magnoliopsida</taxon>
        <taxon>Liliopsida</taxon>
        <taxon>Poales</taxon>
        <taxon>Poaceae</taxon>
        <taxon>BOP clade</taxon>
        <taxon>Oryzoideae</taxon>
        <taxon>Oryzeae</taxon>
        <taxon>Oryzinae</taxon>
        <taxon>Oryza</taxon>
        <taxon>Oryza sativa</taxon>
    </lineage>
</organism>
<dbReference type="EC" id="3.2.1.4"/>
<dbReference type="EMBL" id="AB038510">
    <property type="protein sequence ID" value="BAF37260.1"/>
    <property type="molecule type" value="mRNA"/>
</dbReference>
<dbReference type="EMBL" id="AP002094">
    <property type="protein sequence ID" value="BAD81360.1"/>
    <property type="molecule type" value="Genomic_DNA"/>
</dbReference>
<dbReference type="EMBL" id="AP002745">
    <property type="protein sequence ID" value="BAD81426.1"/>
    <property type="molecule type" value="Genomic_DNA"/>
</dbReference>
<dbReference type="EMBL" id="AP008207">
    <property type="protein sequence ID" value="BAF04337.1"/>
    <property type="molecule type" value="Genomic_DNA"/>
</dbReference>
<dbReference type="EMBL" id="AP014957">
    <property type="protein sequence ID" value="BAS71064.1"/>
    <property type="molecule type" value="Genomic_DNA"/>
</dbReference>
<dbReference type="EMBL" id="CM000138">
    <property type="protein sequence ID" value="EAZ11064.1"/>
    <property type="molecule type" value="Genomic_DNA"/>
</dbReference>
<dbReference type="EMBL" id="AK103304">
    <property type="status" value="NOT_ANNOTATED_CDS"/>
    <property type="molecule type" value="mRNA"/>
</dbReference>
<dbReference type="RefSeq" id="XP_015621149.1">
    <property type="nucleotide sequence ID" value="XM_015765663.1"/>
</dbReference>
<dbReference type="SMR" id="Q5NAT0"/>
<dbReference type="FunCoup" id="Q5NAT0">
    <property type="interactions" value="242"/>
</dbReference>
<dbReference type="STRING" id="39947.Q5NAT0"/>
<dbReference type="CAZy" id="CBM49">
    <property type="family name" value="Carbohydrate-Binding Module Family 49"/>
</dbReference>
<dbReference type="CAZy" id="GH9">
    <property type="family name" value="Glycoside Hydrolase Family 9"/>
</dbReference>
<dbReference type="GlyCosmos" id="Q5NAT0">
    <property type="glycosylation" value="1 site, No reported glycans"/>
</dbReference>
<dbReference type="PaxDb" id="39947-Q5NAT0"/>
<dbReference type="EnsemblPlants" id="Os01t0220100-01">
    <property type="protein sequence ID" value="Os01t0220100-01"/>
    <property type="gene ID" value="Os01g0220100"/>
</dbReference>
<dbReference type="Gramene" id="Os01t0220100-01">
    <property type="protein sequence ID" value="Os01t0220100-01"/>
    <property type="gene ID" value="Os01g0220100"/>
</dbReference>
<dbReference type="KEGG" id="dosa:Os01g0220100"/>
<dbReference type="eggNOG" id="ENOG502QRF6">
    <property type="taxonomic scope" value="Eukaryota"/>
</dbReference>
<dbReference type="HOGENOM" id="CLU_008926_1_4_1"/>
<dbReference type="InParanoid" id="Q5NAT0"/>
<dbReference type="OMA" id="WGPPEEY"/>
<dbReference type="OrthoDB" id="10257085at2759"/>
<dbReference type="Proteomes" id="UP000000763">
    <property type="component" value="Chromosome 1"/>
</dbReference>
<dbReference type="Proteomes" id="UP000007752">
    <property type="component" value="Chromosome 1"/>
</dbReference>
<dbReference type="Proteomes" id="UP000059680">
    <property type="component" value="Chromosome 1"/>
</dbReference>
<dbReference type="GO" id="GO:0005576">
    <property type="term" value="C:extracellular region"/>
    <property type="evidence" value="ECO:0007669"/>
    <property type="project" value="UniProtKB-SubCell"/>
</dbReference>
<dbReference type="GO" id="GO:0030246">
    <property type="term" value="F:carbohydrate binding"/>
    <property type="evidence" value="ECO:0007669"/>
    <property type="project" value="InterPro"/>
</dbReference>
<dbReference type="GO" id="GO:0008810">
    <property type="term" value="F:cellulase activity"/>
    <property type="evidence" value="ECO:0007669"/>
    <property type="project" value="UniProtKB-EC"/>
</dbReference>
<dbReference type="GO" id="GO:0071555">
    <property type="term" value="P:cell wall organization"/>
    <property type="evidence" value="ECO:0007669"/>
    <property type="project" value="UniProtKB-KW"/>
</dbReference>
<dbReference type="GO" id="GO:0030245">
    <property type="term" value="P:cellulose catabolic process"/>
    <property type="evidence" value="ECO:0007669"/>
    <property type="project" value="UniProtKB-KW"/>
</dbReference>
<dbReference type="FunFam" id="1.50.10.10:FF:000020">
    <property type="entry name" value="Endoglucanase"/>
    <property type="match status" value="1"/>
</dbReference>
<dbReference type="Gene3D" id="1.50.10.10">
    <property type="match status" value="1"/>
</dbReference>
<dbReference type="InterPro" id="IPR008928">
    <property type="entry name" value="6-hairpin_glycosidase_sf"/>
</dbReference>
<dbReference type="InterPro" id="IPR012341">
    <property type="entry name" value="6hp_glycosidase-like_sf"/>
</dbReference>
<dbReference type="InterPro" id="IPR019028">
    <property type="entry name" value="CBM_49"/>
</dbReference>
<dbReference type="InterPro" id="IPR001701">
    <property type="entry name" value="Glyco_hydro_9"/>
</dbReference>
<dbReference type="InterPro" id="IPR033126">
    <property type="entry name" value="Glyco_hydro_9_Asp/Glu_AS"/>
</dbReference>
<dbReference type="InterPro" id="IPR018221">
    <property type="entry name" value="Glyco_hydro_9_His_AS"/>
</dbReference>
<dbReference type="PANTHER" id="PTHR22298">
    <property type="entry name" value="ENDO-1,4-BETA-GLUCANASE"/>
    <property type="match status" value="1"/>
</dbReference>
<dbReference type="Pfam" id="PF09478">
    <property type="entry name" value="CBM49"/>
    <property type="match status" value="1"/>
</dbReference>
<dbReference type="Pfam" id="PF00759">
    <property type="entry name" value="Glyco_hydro_9"/>
    <property type="match status" value="1"/>
</dbReference>
<dbReference type="SMART" id="SM01063">
    <property type="entry name" value="CBM49"/>
    <property type="match status" value="1"/>
</dbReference>
<dbReference type="SUPFAM" id="SSF48208">
    <property type="entry name" value="Six-hairpin glycosidases"/>
    <property type="match status" value="1"/>
</dbReference>
<dbReference type="PROSITE" id="PS60032">
    <property type="entry name" value="GH9_1"/>
    <property type="match status" value="1"/>
</dbReference>
<dbReference type="PROSITE" id="PS00592">
    <property type="entry name" value="GH9_2"/>
    <property type="match status" value="1"/>
</dbReference>
<dbReference type="PROSITE" id="PS00698">
    <property type="entry name" value="GH9_3"/>
    <property type="match status" value="1"/>
</dbReference>
<proteinExistence type="evidence at protein level"/>
<evidence type="ECO:0000250" key="1"/>
<evidence type="ECO:0000255" key="2"/>
<evidence type="ECO:0000255" key="3">
    <source>
        <dbReference type="PROSITE-ProRule" id="PRU10059"/>
    </source>
</evidence>
<evidence type="ECO:0000255" key="4">
    <source>
        <dbReference type="PROSITE-ProRule" id="PRU10060"/>
    </source>
</evidence>
<evidence type="ECO:0000255" key="5">
    <source>
        <dbReference type="PROSITE-ProRule" id="PRU10140"/>
    </source>
</evidence>
<evidence type="ECO:0000269" key="6">
    <source>
    </source>
</evidence>
<evidence type="ECO:0000269" key="7">
    <source>
    </source>
</evidence>
<evidence type="ECO:0000269" key="8">
    <source>
    </source>
</evidence>
<evidence type="ECO:0000305" key="9"/>
<sequence>MARGGGAAGVSMAHHLGIALVVLVFAAMAQVARGGGGGHDYGMALSKSILYFEAQRSGVLPGSQRIAWRANSGLADGKANGVDLVGGYYDAGDNVKFGLPMAFTVTMMAWSVIEYGEEMAAAGELGHAVEAIKWGTDYFAKAHPEPNVLYAEVGDGDSDHNCWQRPEDMTTSRQAYRLDPQNPGSDLAGETAAAMAAASLVFRSSNPGYADQLLQHSKQLFDFADKYRGRYDNSITVARNYYGSFSGYGDELLWASAWLYQASDDRRYLDYLANNADALGGTGWSINQFGWDVKYPGVQILAAKFLLQGKAGEHAGVLQGYRRKADFFACSCLGKDAADNVGRTPGGMLYHQRWNNIQFVTSASFLLAVYSDHLAGGAVRCSGGGGAVAGAAELLAFAKSQVDYILGSNPRGTSYMVGYGAVYPRQAHHRGSSIASIRASPSFVSCREGYASWYGRRGGNPNLLDGAVVGGPDEHDDFADERNNYEQTEAATYNNAPLMGILARLAAGHGARARGRLGQSLQHGIAANHTSLPHGANHQHASPVEIEQKATASWEKDGRTYHRYAVTVSNRSPAGGKTVEELHIGIGKLYGPVWGLEKAARYGYVLPSWTPSLPAGESAAFVYVHAAPPADVWVTGYKLV</sequence>
<comment type="function">
    <text evidence="7 8">Hydrolyzes 1,4-beta-glycosyl linkages of 1,4-beta-glucans and 1,3-1,4-beta-glucans. Possesses broad substrate specificity for hemicelluloses of type II cell walls. Substrate preference is carboxymethyl-cellulose &gt; 1,3-1,4-beta-glucan &gt; lichenan &gt; arabinoxylan &gt; phospho-swollen cellulose &gt; xylan &gt; glucomannan. May participate in lateral root development.</text>
</comment>
<comment type="catalytic activity">
    <reaction>
        <text>Endohydrolysis of (1-&gt;4)-beta-D-glucosidic linkages in cellulose, lichenin and cereal beta-D-glucans.</text>
        <dbReference type="EC" id="3.2.1.4"/>
    </reaction>
</comment>
<comment type="biophysicochemical properties">
    <phDependence>
        <text evidence="7">Optimum pH is 5.3-5.6 with 1,3-1,4-beta-glucan as substrate (at 35 degrees Celsius).</text>
    </phDependence>
</comment>
<comment type="subcellular location">
    <subcellularLocation>
        <location evidence="1">Secreted</location>
    </subcellularLocation>
</comment>
<comment type="tissue specificity">
    <text evidence="6">Expressed in roots and flowers.</text>
</comment>
<comment type="developmental stage">
    <text evidence="8">Expressed in lateral root primordia during auxin-induced lateral root development.</text>
</comment>
<comment type="induction">
    <text evidence="7">By auxin in roots (at protein level).</text>
</comment>
<comment type="similarity">
    <text evidence="5 9">Belongs to the glycosyl hydrolase 9 (cellulase E) family.</text>
</comment>
<gene>
    <name type="primary">GLU5</name>
    <name type="ordered locus">Os01g0220100</name>
    <name type="ordered locus">LOC_Os01g12070</name>
    <name type="ORF">OsJ_000889</name>
    <name type="ORF">P0483F08.13</name>
    <name type="ORF">P0489G09.28</name>
</gene>
<name>GUN2_ORYSJ</name>
<protein>
    <recommendedName>
        <fullName>Endoglucanase 2</fullName>
        <ecNumber>3.2.1.4</ecNumber>
    </recommendedName>
    <alternativeName>
        <fullName>Endo-1,4-beta glucanase 2</fullName>
    </alternativeName>
    <alternativeName>
        <fullName>OsCel9A</fullName>
    </alternativeName>
    <alternativeName>
        <fullName>OsGLU5</fullName>
    </alternativeName>
</protein>
<reference key="1">
    <citation type="journal article" date="2006" name="Plant Cell Physiol.">
        <title>A rice family 9 glycoside hydrolase isozyme with broad substrate specificity for hemicelluloses in type II cell walls.</title>
        <authorList>
            <person name="Yoshida K."/>
            <person name="Komae K."/>
        </authorList>
    </citation>
    <scope>NUCLEOTIDE SEQUENCE [MRNA]</scope>
    <scope>PROTEIN SEQUENCE OF 35-64; 48-167; 219-274 AND 295-335</scope>
    <scope>FUNCTION</scope>
    <scope>BIOPHYSICOCHEMICAL PROPERTIES</scope>
    <scope>INDUCTION</scope>
    <scope>IDENTIFICATION BY MASS SPECTROMETRY</scope>
    <source>
        <strain>cv. Sasanishiki</strain>
        <tissue>Root</tissue>
    </source>
</reference>
<reference key="2">
    <citation type="journal article" date="2006" name="Plant Cell Physiol.">
        <title>Carbohydrate-binding module of a rice endo-beta-1,4-glycanase, OsCel9A, expressed in auxin-induced lateral root primordia, is post-translationally truncated.</title>
        <authorList>
            <person name="Yoshida K."/>
            <person name="Imaizumi N."/>
            <person name="Kaneko S."/>
            <person name="Kawagoe Y."/>
            <person name="Tagiri A."/>
            <person name="Tanaka H."/>
            <person name="Nishitani K."/>
            <person name="Komae K."/>
        </authorList>
    </citation>
    <scope>NUCLEOTIDE SEQUENCE [MRNA]</scope>
    <scope>FUNCTION</scope>
    <scope>DEVELOPMENTAL STAGE</scope>
    <source>
        <strain>cv. Sasanishiki</strain>
        <tissue>Root</tissue>
    </source>
</reference>
<reference key="3">
    <citation type="journal article" date="2002" name="Nature">
        <title>The genome sequence and structure of rice chromosome 1.</title>
        <authorList>
            <person name="Sasaki T."/>
            <person name="Matsumoto T."/>
            <person name="Yamamoto K."/>
            <person name="Sakata K."/>
            <person name="Baba T."/>
            <person name="Katayose Y."/>
            <person name="Wu J."/>
            <person name="Niimura Y."/>
            <person name="Cheng Z."/>
            <person name="Nagamura Y."/>
            <person name="Antonio B.A."/>
            <person name="Kanamori H."/>
            <person name="Hosokawa S."/>
            <person name="Masukawa M."/>
            <person name="Arikawa K."/>
            <person name="Chiden Y."/>
            <person name="Hayashi M."/>
            <person name="Okamoto M."/>
            <person name="Ando T."/>
            <person name="Aoki H."/>
            <person name="Arita K."/>
            <person name="Hamada M."/>
            <person name="Harada C."/>
            <person name="Hijishita S."/>
            <person name="Honda M."/>
            <person name="Ichikawa Y."/>
            <person name="Idonuma A."/>
            <person name="Iijima M."/>
            <person name="Ikeda M."/>
            <person name="Ikeno M."/>
            <person name="Ito S."/>
            <person name="Ito T."/>
            <person name="Ito Y."/>
            <person name="Ito Y."/>
            <person name="Iwabuchi A."/>
            <person name="Kamiya K."/>
            <person name="Karasawa W."/>
            <person name="Katagiri S."/>
            <person name="Kikuta A."/>
            <person name="Kobayashi N."/>
            <person name="Kono I."/>
            <person name="Machita K."/>
            <person name="Maehara T."/>
            <person name="Mizuno H."/>
            <person name="Mizubayashi T."/>
            <person name="Mukai Y."/>
            <person name="Nagasaki H."/>
            <person name="Nakashima M."/>
            <person name="Nakama Y."/>
            <person name="Nakamichi Y."/>
            <person name="Nakamura M."/>
            <person name="Namiki N."/>
            <person name="Negishi M."/>
            <person name="Ohta I."/>
            <person name="Ono N."/>
            <person name="Saji S."/>
            <person name="Sakai K."/>
            <person name="Shibata M."/>
            <person name="Shimokawa T."/>
            <person name="Shomura A."/>
            <person name="Song J."/>
            <person name="Takazaki Y."/>
            <person name="Terasawa K."/>
            <person name="Tsuji K."/>
            <person name="Waki K."/>
            <person name="Yamagata H."/>
            <person name="Yamane H."/>
            <person name="Yoshiki S."/>
            <person name="Yoshihara R."/>
            <person name="Yukawa K."/>
            <person name="Zhong H."/>
            <person name="Iwama H."/>
            <person name="Endo T."/>
            <person name="Ito H."/>
            <person name="Hahn J.H."/>
            <person name="Kim H.-I."/>
            <person name="Eun M.-Y."/>
            <person name="Yano M."/>
            <person name="Jiang J."/>
            <person name="Gojobori T."/>
        </authorList>
    </citation>
    <scope>NUCLEOTIDE SEQUENCE [LARGE SCALE GENOMIC DNA]</scope>
    <source>
        <strain>cv. Nipponbare</strain>
    </source>
</reference>
<reference key="4">
    <citation type="journal article" date="2005" name="Nature">
        <title>The map-based sequence of the rice genome.</title>
        <authorList>
            <consortium name="International rice genome sequencing project (IRGSP)"/>
        </authorList>
    </citation>
    <scope>NUCLEOTIDE SEQUENCE [LARGE SCALE GENOMIC DNA]</scope>
    <source>
        <strain>cv. Nipponbare</strain>
    </source>
</reference>
<reference key="5">
    <citation type="journal article" date="2008" name="Nucleic Acids Res.">
        <title>The rice annotation project database (RAP-DB): 2008 update.</title>
        <authorList>
            <consortium name="The rice annotation project (RAP)"/>
        </authorList>
    </citation>
    <scope>GENOME REANNOTATION</scope>
    <source>
        <strain>cv. Nipponbare</strain>
    </source>
</reference>
<reference key="6">
    <citation type="journal article" date="2013" name="Rice">
        <title>Improvement of the Oryza sativa Nipponbare reference genome using next generation sequence and optical map data.</title>
        <authorList>
            <person name="Kawahara Y."/>
            <person name="de la Bastide M."/>
            <person name="Hamilton J.P."/>
            <person name="Kanamori H."/>
            <person name="McCombie W.R."/>
            <person name="Ouyang S."/>
            <person name="Schwartz D.C."/>
            <person name="Tanaka T."/>
            <person name="Wu J."/>
            <person name="Zhou S."/>
            <person name="Childs K.L."/>
            <person name="Davidson R.M."/>
            <person name="Lin H."/>
            <person name="Quesada-Ocampo L."/>
            <person name="Vaillancourt B."/>
            <person name="Sakai H."/>
            <person name="Lee S.S."/>
            <person name="Kim J."/>
            <person name="Numa H."/>
            <person name="Itoh T."/>
            <person name="Buell C.R."/>
            <person name="Matsumoto T."/>
        </authorList>
    </citation>
    <scope>GENOME REANNOTATION</scope>
    <source>
        <strain>cv. Nipponbare</strain>
    </source>
</reference>
<reference key="7">
    <citation type="journal article" date="2005" name="PLoS Biol.">
        <title>The genomes of Oryza sativa: a history of duplications.</title>
        <authorList>
            <person name="Yu J."/>
            <person name="Wang J."/>
            <person name="Lin W."/>
            <person name="Li S."/>
            <person name="Li H."/>
            <person name="Zhou J."/>
            <person name="Ni P."/>
            <person name="Dong W."/>
            <person name="Hu S."/>
            <person name="Zeng C."/>
            <person name="Zhang J."/>
            <person name="Zhang Y."/>
            <person name="Li R."/>
            <person name="Xu Z."/>
            <person name="Li S."/>
            <person name="Li X."/>
            <person name="Zheng H."/>
            <person name="Cong L."/>
            <person name="Lin L."/>
            <person name="Yin J."/>
            <person name="Geng J."/>
            <person name="Li G."/>
            <person name="Shi J."/>
            <person name="Liu J."/>
            <person name="Lv H."/>
            <person name="Li J."/>
            <person name="Wang J."/>
            <person name="Deng Y."/>
            <person name="Ran L."/>
            <person name="Shi X."/>
            <person name="Wang X."/>
            <person name="Wu Q."/>
            <person name="Li C."/>
            <person name="Ren X."/>
            <person name="Wang J."/>
            <person name="Wang X."/>
            <person name="Li D."/>
            <person name="Liu D."/>
            <person name="Zhang X."/>
            <person name="Ji Z."/>
            <person name="Zhao W."/>
            <person name="Sun Y."/>
            <person name="Zhang Z."/>
            <person name="Bao J."/>
            <person name="Han Y."/>
            <person name="Dong L."/>
            <person name="Ji J."/>
            <person name="Chen P."/>
            <person name="Wu S."/>
            <person name="Liu J."/>
            <person name="Xiao Y."/>
            <person name="Bu D."/>
            <person name="Tan J."/>
            <person name="Yang L."/>
            <person name="Ye C."/>
            <person name="Zhang J."/>
            <person name="Xu J."/>
            <person name="Zhou Y."/>
            <person name="Yu Y."/>
            <person name="Zhang B."/>
            <person name="Zhuang S."/>
            <person name="Wei H."/>
            <person name="Liu B."/>
            <person name="Lei M."/>
            <person name="Yu H."/>
            <person name="Li Y."/>
            <person name="Xu H."/>
            <person name="Wei S."/>
            <person name="He X."/>
            <person name="Fang L."/>
            <person name="Zhang Z."/>
            <person name="Zhang Y."/>
            <person name="Huang X."/>
            <person name="Su Z."/>
            <person name="Tong W."/>
            <person name="Li J."/>
            <person name="Tong Z."/>
            <person name="Li S."/>
            <person name="Ye J."/>
            <person name="Wang L."/>
            <person name="Fang L."/>
            <person name="Lei T."/>
            <person name="Chen C.-S."/>
            <person name="Chen H.-C."/>
            <person name="Xu Z."/>
            <person name="Li H."/>
            <person name="Huang H."/>
            <person name="Zhang F."/>
            <person name="Xu H."/>
            <person name="Li N."/>
            <person name="Zhao C."/>
            <person name="Li S."/>
            <person name="Dong L."/>
            <person name="Huang Y."/>
            <person name="Li L."/>
            <person name="Xi Y."/>
            <person name="Qi Q."/>
            <person name="Li W."/>
            <person name="Zhang B."/>
            <person name="Hu W."/>
            <person name="Zhang Y."/>
            <person name="Tian X."/>
            <person name="Jiao Y."/>
            <person name="Liang X."/>
            <person name="Jin J."/>
            <person name="Gao L."/>
            <person name="Zheng W."/>
            <person name="Hao B."/>
            <person name="Liu S.-M."/>
            <person name="Wang W."/>
            <person name="Yuan L."/>
            <person name="Cao M."/>
            <person name="McDermott J."/>
            <person name="Samudrala R."/>
            <person name="Wang J."/>
            <person name="Wong G.K.-S."/>
            <person name="Yang H."/>
        </authorList>
    </citation>
    <scope>NUCLEOTIDE SEQUENCE [LARGE SCALE GENOMIC DNA]</scope>
    <source>
        <strain>cv. Nipponbare</strain>
    </source>
</reference>
<reference key="8">
    <citation type="journal article" date="2003" name="Science">
        <title>Collection, mapping, and annotation of over 28,000 cDNA clones from japonica rice.</title>
        <authorList>
            <consortium name="The rice full-length cDNA consortium"/>
        </authorList>
    </citation>
    <scope>NUCLEOTIDE SEQUENCE [LARGE SCALE MRNA]</scope>
    <source>
        <strain>cv. Nipponbare</strain>
    </source>
</reference>
<reference key="9">
    <citation type="journal article" date="2006" name="Plant Mol. Biol.">
        <title>OsGLU1, a putative membrane-bound endo-1,4-beta-D-glucanase from rice, affects plant internode elongation.</title>
        <authorList>
            <person name="Zhou H.-L."/>
            <person name="He S.-J."/>
            <person name="Cao Y.-R."/>
            <person name="Chen T."/>
            <person name="Du B.-X."/>
            <person name="Chu C.-C."/>
            <person name="Zhang J.-S."/>
            <person name="Chen S.-Y."/>
        </authorList>
    </citation>
    <scope>TISSUE SPECIFICITY</scope>
</reference>
<accession>Q5NAT0</accession>
<accession>A0A0P0V072</accession>
<accession>A0P889</accession>
<accession>Q0JPJ1</accession>
<keyword id="KW-0119">Carbohydrate metabolism</keyword>
<keyword id="KW-0961">Cell wall biogenesis/degradation</keyword>
<keyword id="KW-0136">Cellulose degradation</keyword>
<keyword id="KW-0903">Direct protein sequencing</keyword>
<keyword id="KW-0325">Glycoprotein</keyword>
<keyword id="KW-0326">Glycosidase</keyword>
<keyword id="KW-0378">Hydrolase</keyword>
<keyword id="KW-0624">Polysaccharide degradation</keyword>
<keyword id="KW-1185">Reference proteome</keyword>
<keyword id="KW-0964">Secreted</keyword>
<keyword id="KW-0732">Signal</keyword>
<feature type="signal peptide" evidence="7">
    <location>
        <begin position="1"/>
        <end position="34"/>
    </location>
</feature>
<feature type="chain" id="PRO_0000249279" description="Endoglucanase 2">
    <location>
        <begin position="35"/>
        <end position="511"/>
    </location>
</feature>
<feature type="propeptide" id="PRO_0000372490" description="Removed in mature form">
    <location>
        <begin position="512"/>
        <end position="640"/>
    </location>
</feature>
<feature type="active site" description="Nucleophile" evidence="5">
    <location>
        <position position="93"/>
    </location>
</feature>
<feature type="active site" evidence="3">
    <location>
        <position position="428"/>
    </location>
</feature>
<feature type="active site" evidence="4">
    <location>
        <position position="480"/>
    </location>
</feature>
<feature type="active site" evidence="4">
    <location>
        <position position="489"/>
    </location>
</feature>
<feature type="glycosylation site" description="N-linked (GlcNAc...) asparagine" evidence="2">
    <location>
        <position position="528"/>
    </location>
</feature>
<feature type="sequence conflict" description="In Ref. 8; AK103304." evidence="9" ref="8">
    <original>G</original>
    <variation>S</variation>
    <location>
        <position position="616"/>
    </location>
</feature>